<dbReference type="EMBL" id="AE002098">
    <property type="protein sequence ID" value="AAF42450.1"/>
    <property type="status" value="ALT_INIT"/>
    <property type="molecule type" value="Genomic_DNA"/>
</dbReference>
<dbReference type="PIR" id="D81002">
    <property type="entry name" value="D81002"/>
</dbReference>
<dbReference type="RefSeq" id="NP_275127.1">
    <property type="nucleotide sequence ID" value="NC_003112.2"/>
</dbReference>
<dbReference type="RefSeq" id="WP_002225739.1">
    <property type="nucleotide sequence ID" value="NC_003112.2"/>
</dbReference>
<dbReference type="SMR" id="Q9JXB0"/>
<dbReference type="STRING" id="122586.NMB2142"/>
<dbReference type="PaxDb" id="122586-NMB2142"/>
<dbReference type="KEGG" id="nme:NMB2142"/>
<dbReference type="PATRIC" id="fig|122586.8.peg.2735"/>
<dbReference type="HOGENOM" id="CLU_064263_0_0_4"/>
<dbReference type="InParanoid" id="Q9JXB0"/>
<dbReference type="OrthoDB" id="9763101at2"/>
<dbReference type="Proteomes" id="UP000000425">
    <property type="component" value="Chromosome"/>
</dbReference>
<dbReference type="Gene3D" id="3.20.20.150">
    <property type="entry name" value="Divalent-metal-dependent TIM barrel enzymes"/>
    <property type="match status" value="1"/>
</dbReference>
<dbReference type="HAMAP" id="MF_00697">
    <property type="entry name" value="UPF0276"/>
    <property type="match status" value="1"/>
</dbReference>
<dbReference type="InterPro" id="IPR007801">
    <property type="entry name" value="MbnB/TglH/ChrH"/>
</dbReference>
<dbReference type="InterPro" id="IPR036237">
    <property type="entry name" value="Xyl_isomerase-like_sf"/>
</dbReference>
<dbReference type="NCBIfam" id="NF003818">
    <property type="entry name" value="PRK05409.1"/>
    <property type="match status" value="1"/>
</dbReference>
<dbReference type="PANTHER" id="PTHR42194">
    <property type="entry name" value="UPF0276 PROTEIN HI_1600"/>
    <property type="match status" value="1"/>
</dbReference>
<dbReference type="PANTHER" id="PTHR42194:SF1">
    <property type="entry name" value="UPF0276 PROTEIN HI_1600"/>
    <property type="match status" value="1"/>
</dbReference>
<dbReference type="Pfam" id="PF05114">
    <property type="entry name" value="MbnB_TglH_ChrH"/>
    <property type="match status" value="1"/>
</dbReference>
<dbReference type="SUPFAM" id="SSF51658">
    <property type="entry name" value="Xylose isomerase-like"/>
    <property type="match status" value="1"/>
</dbReference>
<protein>
    <recommendedName>
        <fullName evidence="1">UPF0276 protein NMB2142</fullName>
    </recommendedName>
</protein>
<evidence type="ECO:0000255" key="1">
    <source>
        <dbReference type="HAMAP-Rule" id="MF_00697"/>
    </source>
</evidence>
<evidence type="ECO:0000305" key="2"/>
<name>Y2142_NEIMB</name>
<feature type="chain" id="PRO_0000192698" description="UPF0276 protein NMB2142">
    <location>
        <begin position="1"/>
        <end position="280"/>
    </location>
</feature>
<gene>
    <name type="ordered locus">NMB2142</name>
</gene>
<organism>
    <name type="scientific">Neisseria meningitidis serogroup B (strain ATCC BAA-335 / MC58)</name>
    <dbReference type="NCBI Taxonomy" id="122586"/>
    <lineage>
        <taxon>Bacteria</taxon>
        <taxon>Pseudomonadati</taxon>
        <taxon>Pseudomonadota</taxon>
        <taxon>Betaproteobacteria</taxon>
        <taxon>Neisseriales</taxon>
        <taxon>Neisseriaceae</taxon>
        <taxon>Neisseria</taxon>
    </lineage>
</organism>
<proteinExistence type="inferred from homology"/>
<keyword id="KW-1185">Reference proteome</keyword>
<reference key="1">
    <citation type="journal article" date="2000" name="Science">
        <title>Complete genome sequence of Neisseria meningitidis serogroup B strain MC58.</title>
        <authorList>
            <person name="Tettelin H."/>
            <person name="Saunders N.J."/>
            <person name="Heidelberg J.F."/>
            <person name="Jeffries A.C."/>
            <person name="Nelson K.E."/>
            <person name="Eisen J.A."/>
            <person name="Ketchum K.A."/>
            <person name="Hood D.W."/>
            <person name="Peden J.F."/>
            <person name="Dodson R.J."/>
            <person name="Nelson W.C."/>
            <person name="Gwinn M.L."/>
            <person name="DeBoy R.T."/>
            <person name="Peterson J.D."/>
            <person name="Hickey E.K."/>
            <person name="Haft D.H."/>
            <person name="Salzberg S.L."/>
            <person name="White O."/>
            <person name="Fleischmann R.D."/>
            <person name="Dougherty B.A."/>
            <person name="Mason T.M."/>
            <person name="Ciecko A."/>
            <person name="Parksey D.S."/>
            <person name="Blair E."/>
            <person name="Cittone H."/>
            <person name="Clark E.B."/>
            <person name="Cotton M.D."/>
            <person name="Utterback T.R."/>
            <person name="Khouri H.M."/>
            <person name="Qin H."/>
            <person name="Vamathevan J.J."/>
            <person name="Gill J."/>
            <person name="Scarlato V."/>
            <person name="Masignani V."/>
            <person name="Pizza M."/>
            <person name="Grandi G."/>
            <person name="Sun L."/>
            <person name="Smith H.O."/>
            <person name="Fraser C.M."/>
            <person name="Moxon E.R."/>
            <person name="Rappuoli R."/>
            <person name="Venter J.C."/>
        </authorList>
    </citation>
    <scope>NUCLEOTIDE SEQUENCE [LARGE SCALE GENOMIC DNA]</scope>
    <source>
        <strain>ATCC BAA-335 / MC58</strain>
    </source>
</reference>
<comment type="similarity">
    <text evidence="1">Belongs to the UPF0276 family.</text>
</comment>
<comment type="sequence caution" evidence="2">
    <conflict type="erroneous initiation">
        <sequence resource="EMBL-CDS" id="AAF42450"/>
    </conflict>
</comment>
<accession>Q9JXB0</accession>
<sequence length="280" mass="31603">MIQHAGLGYRRDLAEDFLSLSENSPICFIEAAPENWLKMGGWARKQFDRVAERLPLALHGLSMSLGGQAPLDTDLIDGIKEMMRRYDCTFFSDHLSYCHDGGHLYDLLPLPFTEEMVHHTARRIREVQDRLGCRIAVENTSYYLHSPLAEMNEVEFLNAVAREADCGIHLDVNNIYVNAVNHGLLSPEAFLENVDAERVCYIHIAGHDVETPELLIDTHGAAVLPTVWDLLELAYAKLPTIPPTLLERDFNFPPFSELEAEVAKIADYQTRAGKECRRAA</sequence>